<proteinExistence type="inferred from homology"/>
<reference key="1">
    <citation type="journal article" date="2002" name="DNA Res.">
        <title>Complete genomic sequence of nitrogen-fixing symbiotic bacterium Bradyrhizobium japonicum USDA110.</title>
        <authorList>
            <person name="Kaneko T."/>
            <person name="Nakamura Y."/>
            <person name="Sato S."/>
            <person name="Minamisawa K."/>
            <person name="Uchiumi T."/>
            <person name="Sasamoto S."/>
            <person name="Watanabe A."/>
            <person name="Idesawa K."/>
            <person name="Iriguchi M."/>
            <person name="Kawashima K."/>
            <person name="Kohara M."/>
            <person name="Matsumoto M."/>
            <person name="Shimpo S."/>
            <person name="Tsuruoka H."/>
            <person name="Wada T."/>
            <person name="Yamada M."/>
            <person name="Tabata S."/>
        </authorList>
    </citation>
    <scope>NUCLEOTIDE SEQUENCE [LARGE SCALE GENOMIC DNA]</scope>
    <source>
        <strain>JCM 10833 / BCRC 13528 / IAM 13628 / NBRC 14792 / USDA 110</strain>
    </source>
</reference>
<evidence type="ECO:0000255" key="1">
    <source>
        <dbReference type="HAMAP-Rule" id="MF_01400"/>
    </source>
</evidence>
<evidence type="ECO:0000255" key="2">
    <source>
        <dbReference type="PROSITE-ProRule" id="PRU01126"/>
    </source>
</evidence>
<comment type="catalytic activity">
    <reaction evidence="1">
        <text>L-methionyl-[protein] + [thioredoxin]-disulfide + H2O = L-methionyl-(R)-S-oxide-[protein] + [thioredoxin]-dithiol</text>
        <dbReference type="Rhea" id="RHEA:24164"/>
        <dbReference type="Rhea" id="RHEA-COMP:10698"/>
        <dbReference type="Rhea" id="RHEA-COMP:10700"/>
        <dbReference type="Rhea" id="RHEA-COMP:12313"/>
        <dbReference type="Rhea" id="RHEA-COMP:12314"/>
        <dbReference type="ChEBI" id="CHEBI:15377"/>
        <dbReference type="ChEBI" id="CHEBI:16044"/>
        <dbReference type="ChEBI" id="CHEBI:29950"/>
        <dbReference type="ChEBI" id="CHEBI:45764"/>
        <dbReference type="ChEBI" id="CHEBI:50058"/>
        <dbReference type="EC" id="1.8.4.12"/>
    </reaction>
</comment>
<comment type="cofactor">
    <cofactor evidence="1">
        <name>Zn(2+)</name>
        <dbReference type="ChEBI" id="CHEBI:29105"/>
    </cofactor>
    <text evidence="1">Binds 1 zinc ion per subunit. The zinc ion is important for the structural integrity of the protein.</text>
</comment>
<comment type="similarity">
    <text evidence="1">Belongs to the MsrB Met sulfoxide reductase family.</text>
</comment>
<feature type="chain" id="PRO_0000140263" description="Peptide methionine sulfoxide reductase MsrB">
    <location>
        <begin position="1"/>
        <end position="139"/>
    </location>
</feature>
<feature type="domain" description="MsrB" evidence="2">
    <location>
        <begin position="17"/>
        <end position="139"/>
    </location>
</feature>
<feature type="active site" description="Nucleophile" evidence="2">
    <location>
        <position position="128"/>
    </location>
</feature>
<feature type="binding site" evidence="2">
    <location>
        <position position="56"/>
    </location>
    <ligand>
        <name>Zn(2+)</name>
        <dbReference type="ChEBI" id="CHEBI:29105"/>
    </ligand>
</feature>
<feature type="binding site" evidence="2">
    <location>
        <position position="59"/>
    </location>
    <ligand>
        <name>Zn(2+)</name>
        <dbReference type="ChEBI" id="CHEBI:29105"/>
    </ligand>
</feature>
<feature type="binding site" evidence="2">
    <location>
        <position position="105"/>
    </location>
    <ligand>
        <name>Zn(2+)</name>
        <dbReference type="ChEBI" id="CHEBI:29105"/>
    </ligand>
</feature>
<feature type="binding site" evidence="2">
    <location>
        <position position="108"/>
    </location>
    <ligand>
        <name>Zn(2+)</name>
        <dbReference type="ChEBI" id="CHEBI:29105"/>
    </ligand>
</feature>
<dbReference type="EC" id="1.8.4.12" evidence="1"/>
<dbReference type="EMBL" id="BA000040">
    <property type="protein sequence ID" value="BAC52309.1"/>
    <property type="molecule type" value="Genomic_DNA"/>
</dbReference>
<dbReference type="RefSeq" id="NP_773684.1">
    <property type="nucleotide sequence ID" value="NC_004463.1"/>
</dbReference>
<dbReference type="RefSeq" id="WP_011089781.1">
    <property type="nucleotide sequence ID" value="NC_004463.1"/>
</dbReference>
<dbReference type="SMR" id="Q89EM9"/>
<dbReference type="FunCoup" id="Q89EM9">
    <property type="interactions" value="615"/>
</dbReference>
<dbReference type="STRING" id="224911.AAV28_32850"/>
<dbReference type="EnsemblBacteria" id="BAC52309">
    <property type="protein sequence ID" value="BAC52309"/>
    <property type="gene ID" value="BAC52309"/>
</dbReference>
<dbReference type="GeneID" id="46494008"/>
<dbReference type="KEGG" id="bja:blr7044"/>
<dbReference type="PATRIC" id="fig|224911.44.peg.7099"/>
<dbReference type="eggNOG" id="COG0229">
    <property type="taxonomic scope" value="Bacteria"/>
</dbReference>
<dbReference type="HOGENOM" id="CLU_031040_8_5_5"/>
<dbReference type="InParanoid" id="Q89EM9"/>
<dbReference type="OrthoDB" id="9785497at2"/>
<dbReference type="PhylomeDB" id="Q89EM9"/>
<dbReference type="Proteomes" id="UP000002526">
    <property type="component" value="Chromosome"/>
</dbReference>
<dbReference type="GO" id="GO:0005737">
    <property type="term" value="C:cytoplasm"/>
    <property type="evidence" value="ECO:0000318"/>
    <property type="project" value="GO_Central"/>
</dbReference>
<dbReference type="GO" id="GO:0033743">
    <property type="term" value="F:peptide-methionine (R)-S-oxide reductase activity"/>
    <property type="evidence" value="ECO:0000318"/>
    <property type="project" value="GO_Central"/>
</dbReference>
<dbReference type="GO" id="GO:0008270">
    <property type="term" value="F:zinc ion binding"/>
    <property type="evidence" value="ECO:0007669"/>
    <property type="project" value="UniProtKB-UniRule"/>
</dbReference>
<dbReference type="GO" id="GO:0030091">
    <property type="term" value="P:protein repair"/>
    <property type="evidence" value="ECO:0007669"/>
    <property type="project" value="InterPro"/>
</dbReference>
<dbReference type="GO" id="GO:0006979">
    <property type="term" value="P:response to oxidative stress"/>
    <property type="evidence" value="ECO:0007669"/>
    <property type="project" value="InterPro"/>
</dbReference>
<dbReference type="FunFam" id="2.170.150.20:FF:000009">
    <property type="entry name" value="Peptide-methionine (R)-S-oxide reductase"/>
    <property type="match status" value="1"/>
</dbReference>
<dbReference type="Gene3D" id="2.170.150.20">
    <property type="entry name" value="Peptide methionine sulfoxide reductase"/>
    <property type="match status" value="1"/>
</dbReference>
<dbReference type="HAMAP" id="MF_01400">
    <property type="entry name" value="MsrB"/>
    <property type="match status" value="1"/>
</dbReference>
<dbReference type="InterPro" id="IPR028427">
    <property type="entry name" value="Met_Sox_Rdtase_MsrB"/>
</dbReference>
<dbReference type="InterPro" id="IPR002579">
    <property type="entry name" value="Met_Sox_Rdtase_MsrB_dom"/>
</dbReference>
<dbReference type="InterPro" id="IPR011057">
    <property type="entry name" value="Mss4-like_sf"/>
</dbReference>
<dbReference type="NCBIfam" id="TIGR00357">
    <property type="entry name" value="peptide-methionine (R)-S-oxide reductase MsrB"/>
    <property type="match status" value="1"/>
</dbReference>
<dbReference type="PANTHER" id="PTHR10173">
    <property type="entry name" value="METHIONINE SULFOXIDE REDUCTASE"/>
    <property type="match status" value="1"/>
</dbReference>
<dbReference type="PANTHER" id="PTHR10173:SF52">
    <property type="entry name" value="METHIONINE-R-SULFOXIDE REDUCTASE B1"/>
    <property type="match status" value="1"/>
</dbReference>
<dbReference type="Pfam" id="PF01641">
    <property type="entry name" value="SelR"/>
    <property type="match status" value="1"/>
</dbReference>
<dbReference type="SUPFAM" id="SSF51316">
    <property type="entry name" value="Mss4-like"/>
    <property type="match status" value="1"/>
</dbReference>
<dbReference type="PROSITE" id="PS51790">
    <property type="entry name" value="MSRB"/>
    <property type="match status" value="1"/>
</dbReference>
<keyword id="KW-0479">Metal-binding</keyword>
<keyword id="KW-0560">Oxidoreductase</keyword>
<keyword id="KW-1185">Reference proteome</keyword>
<keyword id="KW-0862">Zinc</keyword>
<gene>
    <name evidence="1" type="primary">msrB</name>
    <name type="ordered locus">blr7044</name>
</gene>
<name>MSRB_BRADU</name>
<sequence length="139" mass="15412">MPDAKTKTTDDKVIKSEEQWRRELSPIQYAVLREKATERPFSGEYEHDHRAGTYVCAGCGNVLFESDAKFDSGCGWPSFTQPAVESHVDEERDVSHGMIRTEVLCAKCSGHLGHVFPDGPGPTGLRYCINSAALKLEPK</sequence>
<accession>Q89EM9</accession>
<protein>
    <recommendedName>
        <fullName evidence="1">Peptide methionine sulfoxide reductase MsrB</fullName>
        <ecNumber evidence="1">1.8.4.12</ecNumber>
    </recommendedName>
    <alternativeName>
        <fullName evidence="1">Peptide-methionine (R)-S-oxide reductase</fullName>
    </alternativeName>
</protein>
<organism>
    <name type="scientific">Bradyrhizobium diazoefficiens (strain JCM 10833 / BCRC 13528 / IAM 13628 / NBRC 14792 / USDA 110)</name>
    <dbReference type="NCBI Taxonomy" id="224911"/>
    <lineage>
        <taxon>Bacteria</taxon>
        <taxon>Pseudomonadati</taxon>
        <taxon>Pseudomonadota</taxon>
        <taxon>Alphaproteobacteria</taxon>
        <taxon>Hyphomicrobiales</taxon>
        <taxon>Nitrobacteraceae</taxon>
        <taxon>Bradyrhizobium</taxon>
    </lineage>
</organism>